<accession>P23909</accession>
<accession>P71279</accession>
<accession>Q2MA96</accession>
<proteinExistence type="evidence at protein level"/>
<dbReference type="EMBL" id="M64730">
    <property type="protein sequence ID" value="AAA24188.1"/>
    <property type="molecule type" value="Genomic_DNA"/>
</dbReference>
<dbReference type="EMBL" id="U29579">
    <property type="protein sequence ID" value="AAA69243.1"/>
    <property type="molecule type" value="Genomic_DNA"/>
</dbReference>
<dbReference type="EMBL" id="U00096">
    <property type="protein sequence ID" value="AAC75775.1"/>
    <property type="molecule type" value="Genomic_DNA"/>
</dbReference>
<dbReference type="EMBL" id="AP009048">
    <property type="protein sequence ID" value="BAE76810.1"/>
    <property type="molecule type" value="Genomic_DNA"/>
</dbReference>
<dbReference type="EMBL" id="AF004287">
    <property type="protein sequence ID" value="AAD01197.1"/>
    <property type="molecule type" value="Genomic_DNA"/>
</dbReference>
<dbReference type="EMBL" id="AF001987">
    <property type="protein sequence ID" value="AAD00921.1"/>
    <property type="molecule type" value="Genomic_DNA"/>
</dbReference>
<dbReference type="EMBL" id="AF001988">
    <property type="protein sequence ID" value="AAD00922.1"/>
    <property type="molecule type" value="Genomic_DNA"/>
</dbReference>
<dbReference type="EMBL" id="AF001989">
    <property type="protein sequence ID" value="AAD00923.1"/>
    <property type="molecule type" value="Genomic_DNA"/>
</dbReference>
<dbReference type="EMBL" id="AF001990">
    <property type="protein sequence ID" value="AAD00924.1"/>
    <property type="molecule type" value="Genomic_DNA"/>
</dbReference>
<dbReference type="EMBL" id="AF001991">
    <property type="protein sequence ID" value="AAD00925.1"/>
    <property type="molecule type" value="Genomic_DNA"/>
</dbReference>
<dbReference type="EMBL" id="AF001992">
    <property type="protein sequence ID" value="AAD00926.1"/>
    <property type="molecule type" value="Genomic_DNA"/>
</dbReference>
<dbReference type="EMBL" id="AF001993">
    <property type="protein sequence ID" value="AAD00927.1"/>
    <property type="molecule type" value="Genomic_DNA"/>
</dbReference>
<dbReference type="EMBL" id="AF001994">
    <property type="protein sequence ID" value="AAD00928.1"/>
    <property type="molecule type" value="Genomic_DNA"/>
</dbReference>
<dbReference type="EMBL" id="AF001995">
    <property type="protein sequence ID" value="AAD00929.1"/>
    <property type="molecule type" value="Genomic_DNA"/>
</dbReference>
<dbReference type="EMBL" id="AF001996">
    <property type="protein sequence ID" value="AAD00930.1"/>
    <property type="molecule type" value="Genomic_DNA"/>
</dbReference>
<dbReference type="EMBL" id="AF001997">
    <property type="protein sequence ID" value="AAD00931.1"/>
    <property type="molecule type" value="Genomic_DNA"/>
</dbReference>
<dbReference type="EMBL" id="AF001998">
    <property type="protein sequence ID" value="AAD00932.1"/>
    <property type="molecule type" value="Genomic_DNA"/>
</dbReference>
<dbReference type="EMBL" id="AF001999">
    <property type="protein sequence ID" value="AAD00933.1"/>
    <property type="molecule type" value="Genomic_DNA"/>
</dbReference>
<dbReference type="EMBL" id="AF002000">
    <property type="protein sequence ID" value="AAD00934.1"/>
    <property type="molecule type" value="Genomic_DNA"/>
</dbReference>
<dbReference type="EMBL" id="AF002001">
    <property type="protein sequence ID" value="AAD00935.1"/>
    <property type="molecule type" value="Genomic_DNA"/>
</dbReference>
<dbReference type="EMBL" id="AF002002">
    <property type="protein sequence ID" value="AAD00936.1"/>
    <property type="molecule type" value="Genomic_DNA"/>
</dbReference>
<dbReference type="EMBL" id="AF002003">
    <property type="protein sequence ID" value="AAD00937.1"/>
    <property type="molecule type" value="Genomic_DNA"/>
</dbReference>
<dbReference type="EMBL" id="AF002004">
    <property type="protein sequence ID" value="AAD00938.1"/>
    <property type="molecule type" value="Genomic_DNA"/>
</dbReference>
<dbReference type="EMBL" id="AF002005">
    <property type="protein sequence ID" value="AAD00939.1"/>
    <property type="molecule type" value="Genomic_DNA"/>
</dbReference>
<dbReference type="EMBL" id="AF002006">
    <property type="protein sequence ID" value="AAD00940.1"/>
    <property type="molecule type" value="Genomic_DNA"/>
</dbReference>
<dbReference type="EMBL" id="AF002007">
    <property type="protein sequence ID" value="AAD00941.1"/>
    <property type="molecule type" value="Genomic_DNA"/>
</dbReference>
<dbReference type="EMBL" id="AF002008">
    <property type="protein sequence ID" value="AAD00942.1"/>
    <property type="molecule type" value="Genomic_DNA"/>
</dbReference>
<dbReference type="EMBL" id="AF002009">
    <property type="protein sequence ID" value="AAD00943.1"/>
    <property type="molecule type" value="Genomic_DNA"/>
</dbReference>
<dbReference type="EMBL" id="AF002010">
    <property type="protein sequence ID" value="AAD00944.1"/>
    <property type="molecule type" value="Genomic_DNA"/>
</dbReference>
<dbReference type="PIR" id="I54964">
    <property type="entry name" value="I54964"/>
</dbReference>
<dbReference type="RefSeq" id="NP_417213.1">
    <property type="nucleotide sequence ID" value="NC_000913.3"/>
</dbReference>
<dbReference type="RefSeq" id="WP_001272928.1">
    <property type="nucleotide sequence ID" value="NZ_LN832404.1"/>
</dbReference>
<dbReference type="PDB" id="1E3M">
    <property type="method" value="X-ray"/>
    <property type="resolution" value="2.20 A"/>
    <property type="chains" value="A/B=1-800"/>
</dbReference>
<dbReference type="PDB" id="1NG9">
    <property type="method" value="X-ray"/>
    <property type="resolution" value="2.60 A"/>
    <property type="chains" value="A/B=1-800"/>
</dbReference>
<dbReference type="PDB" id="1OH5">
    <property type="method" value="X-ray"/>
    <property type="resolution" value="2.90 A"/>
    <property type="chains" value="A/B=1-800"/>
</dbReference>
<dbReference type="PDB" id="1OH6">
    <property type="method" value="X-ray"/>
    <property type="resolution" value="2.40 A"/>
    <property type="chains" value="A/B=1-800"/>
</dbReference>
<dbReference type="PDB" id="1OH7">
    <property type="method" value="X-ray"/>
    <property type="resolution" value="2.50 A"/>
    <property type="chains" value="A/B=1-800"/>
</dbReference>
<dbReference type="PDB" id="1OH8">
    <property type="method" value="X-ray"/>
    <property type="resolution" value="2.90 A"/>
    <property type="chains" value="A/B=1-800"/>
</dbReference>
<dbReference type="PDB" id="1W7A">
    <property type="method" value="X-ray"/>
    <property type="resolution" value="2.27 A"/>
    <property type="chains" value="A/B=1-800"/>
</dbReference>
<dbReference type="PDB" id="1WB9">
    <property type="method" value="X-ray"/>
    <property type="resolution" value="2.10 A"/>
    <property type="chains" value="A/B=1-800"/>
</dbReference>
<dbReference type="PDB" id="1WBB">
    <property type="method" value="X-ray"/>
    <property type="resolution" value="2.50 A"/>
    <property type="chains" value="A/B=1-800"/>
</dbReference>
<dbReference type="PDB" id="1WBD">
    <property type="method" value="X-ray"/>
    <property type="resolution" value="2.40 A"/>
    <property type="chains" value="A/B=1-800"/>
</dbReference>
<dbReference type="PDB" id="2OK2">
    <property type="method" value="X-ray"/>
    <property type="resolution" value="2.00 A"/>
    <property type="chains" value="A/B=820-853"/>
</dbReference>
<dbReference type="PDB" id="2WTU">
    <property type="method" value="X-ray"/>
    <property type="resolution" value="3.40 A"/>
    <property type="chains" value="A/B=1-800"/>
</dbReference>
<dbReference type="PDB" id="3K0S">
    <property type="method" value="X-ray"/>
    <property type="resolution" value="2.20 A"/>
    <property type="chains" value="A/B=2-800"/>
</dbReference>
<dbReference type="PDB" id="3ZLJ">
    <property type="method" value="X-ray"/>
    <property type="resolution" value="3.10 A"/>
    <property type="chains" value="A/B=1-800, C/D=801-853"/>
</dbReference>
<dbReference type="PDB" id="5AKB">
    <property type="method" value="X-ray"/>
    <property type="resolution" value="4.71 A"/>
    <property type="chains" value="A/B/E=1-800"/>
</dbReference>
<dbReference type="PDB" id="5AKC">
    <property type="method" value="X-ray"/>
    <property type="resolution" value="6.60 A"/>
    <property type="chains" value="A/B/E/F/I/J=1-800"/>
</dbReference>
<dbReference type="PDB" id="5AKD">
    <property type="method" value="X-ray"/>
    <property type="resolution" value="7.60 A"/>
    <property type="chains" value="A/B/E/F/I/J=1-800"/>
</dbReference>
<dbReference type="PDB" id="6I5F">
    <property type="method" value="X-ray"/>
    <property type="resolution" value="2.60 A"/>
    <property type="chains" value="A/B=1-853"/>
</dbReference>
<dbReference type="PDB" id="7AI5">
    <property type="method" value="EM"/>
    <property type="resolution" value="5.00 A"/>
    <property type="chains" value="A/B=1-853"/>
</dbReference>
<dbReference type="PDB" id="7AI6">
    <property type="method" value="EM"/>
    <property type="resolution" value="6.90 A"/>
    <property type="chains" value="A/B=1-853"/>
</dbReference>
<dbReference type="PDB" id="7AI7">
    <property type="method" value="EM"/>
    <property type="resolution" value="3.90 A"/>
    <property type="chains" value="A/B=1-853"/>
</dbReference>
<dbReference type="PDB" id="7AIB">
    <property type="method" value="EM"/>
    <property type="resolution" value="4.70 A"/>
    <property type="chains" value="A/B=1-853"/>
</dbReference>
<dbReference type="PDB" id="7AIC">
    <property type="method" value="EM"/>
    <property type="resolution" value="5.00 A"/>
    <property type="chains" value="A/B=1-853"/>
</dbReference>
<dbReference type="PDB" id="7OTO">
    <property type="method" value="EM"/>
    <property type="resolution" value="3.40 A"/>
    <property type="chains" value="A/B=1-800"/>
</dbReference>
<dbReference type="PDB" id="7OU0">
    <property type="method" value="EM"/>
    <property type="resolution" value="3.80 A"/>
    <property type="chains" value="A/B=1-799"/>
</dbReference>
<dbReference type="PDB" id="7OU2">
    <property type="method" value="EM"/>
    <property type="resolution" value="4.80 A"/>
    <property type="chains" value="A/B=8-853"/>
</dbReference>
<dbReference type="PDB" id="7OU4">
    <property type="method" value="EM"/>
    <property type="resolution" value="3.20 A"/>
    <property type="chains" value="A/B=1-800"/>
</dbReference>
<dbReference type="PDBsum" id="1E3M"/>
<dbReference type="PDBsum" id="1NG9"/>
<dbReference type="PDBsum" id="1OH5"/>
<dbReference type="PDBsum" id="1OH6"/>
<dbReference type="PDBsum" id="1OH7"/>
<dbReference type="PDBsum" id="1OH8"/>
<dbReference type="PDBsum" id="1W7A"/>
<dbReference type="PDBsum" id="1WB9"/>
<dbReference type="PDBsum" id="1WBB"/>
<dbReference type="PDBsum" id="1WBD"/>
<dbReference type="PDBsum" id="2OK2"/>
<dbReference type="PDBsum" id="2WTU"/>
<dbReference type="PDBsum" id="3K0S"/>
<dbReference type="PDBsum" id="3ZLJ"/>
<dbReference type="PDBsum" id="5AKB"/>
<dbReference type="PDBsum" id="5AKC"/>
<dbReference type="PDBsum" id="5AKD"/>
<dbReference type="PDBsum" id="6I5F"/>
<dbReference type="PDBsum" id="7AI5"/>
<dbReference type="PDBsum" id="7AI6"/>
<dbReference type="PDBsum" id="7AI7"/>
<dbReference type="PDBsum" id="7AIB"/>
<dbReference type="PDBsum" id="7AIC"/>
<dbReference type="PDBsum" id="7OTO"/>
<dbReference type="PDBsum" id="7OU0"/>
<dbReference type="PDBsum" id="7OU2"/>
<dbReference type="PDBsum" id="7OU4"/>
<dbReference type="EMDB" id="EMD-11792"/>
<dbReference type="EMDB" id="EMD-11793"/>
<dbReference type="EMDB" id="EMD-11794"/>
<dbReference type="EMDB" id="EMD-11795"/>
<dbReference type="EMDB" id="EMD-13063"/>
<dbReference type="EMDB" id="EMD-13071"/>
<dbReference type="EMDB" id="EMD-13074"/>
<dbReference type="SASBDB" id="P23909"/>
<dbReference type="SMR" id="P23909"/>
<dbReference type="BioGRID" id="4261421">
    <property type="interactions" value="152"/>
</dbReference>
<dbReference type="ComplexPortal" id="CPX-5541">
    <property type="entry name" value="MutHLS methyl-directed mismatch repair complex"/>
</dbReference>
<dbReference type="ComplexPortal" id="CPX-93">
    <property type="entry name" value="MutS DNA mismatch repair complex"/>
</dbReference>
<dbReference type="DIP" id="DIP-10287N"/>
<dbReference type="FunCoup" id="P23909">
    <property type="interactions" value="692"/>
</dbReference>
<dbReference type="IntAct" id="P23909">
    <property type="interactions" value="10"/>
</dbReference>
<dbReference type="MINT" id="P23909"/>
<dbReference type="STRING" id="511145.b2733"/>
<dbReference type="jPOST" id="P23909"/>
<dbReference type="PaxDb" id="511145-b2733"/>
<dbReference type="EnsemblBacteria" id="AAC75775">
    <property type="protein sequence ID" value="AAC75775"/>
    <property type="gene ID" value="b2733"/>
</dbReference>
<dbReference type="GeneID" id="947206"/>
<dbReference type="KEGG" id="ecj:JW2703"/>
<dbReference type="KEGG" id="eco:b2733"/>
<dbReference type="KEGG" id="ecoc:C3026_15035"/>
<dbReference type="PATRIC" id="fig|1411691.4.peg.4007"/>
<dbReference type="EchoBASE" id="EB0620"/>
<dbReference type="eggNOG" id="COG0249">
    <property type="taxonomic scope" value="Bacteria"/>
</dbReference>
<dbReference type="HOGENOM" id="CLU_002472_4_0_6"/>
<dbReference type="InParanoid" id="P23909"/>
<dbReference type="OMA" id="TPMMAQY"/>
<dbReference type="OrthoDB" id="9802448at2"/>
<dbReference type="PhylomeDB" id="P23909"/>
<dbReference type="BioCyc" id="EcoCyc:EG10625-MONOMER"/>
<dbReference type="BioCyc" id="MetaCyc:EG10625-MONOMER"/>
<dbReference type="EvolutionaryTrace" id="P23909"/>
<dbReference type="PRO" id="PR:P23909"/>
<dbReference type="Proteomes" id="UP000000625">
    <property type="component" value="Chromosome"/>
</dbReference>
<dbReference type="GO" id="GO:0005829">
    <property type="term" value="C:cytosol"/>
    <property type="evidence" value="ECO:0000314"/>
    <property type="project" value="EcoCyc"/>
</dbReference>
<dbReference type="GO" id="GO:0032300">
    <property type="term" value="C:mismatch repair complex"/>
    <property type="evidence" value="ECO:0000303"/>
    <property type="project" value="ComplexPortal"/>
</dbReference>
<dbReference type="GO" id="GO:1990710">
    <property type="term" value="C:MutS complex"/>
    <property type="evidence" value="ECO:0000353"/>
    <property type="project" value="ComplexPortal"/>
</dbReference>
<dbReference type="GO" id="GO:0032136">
    <property type="term" value="F:adenine/cytosine mispair binding"/>
    <property type="evidence" value="ECO:0000314"/>
    <property type="project" value="EcoliWiki"/>
</dbReference>
<dbReference type="GO" id="GO:0043531">
    <property type="term" value="F:ADP binding"/>
    <property type="evidence" value="ECO:0000314"/>
    <property type="project" value="EcoliWiki"/>
</dbReference>
<dbReference type="GO" id="GO:0005524">
    <property type="term" value="F:ATP binding"/>
    <property type="evidence" value="ECO:0000314"/>
    <property type="project" value="EcoliWiki"/>
</dbReference>
<dbReference type="GO" id="GO:0016887">
    <property type="term" value="F:ATP hydrolysis activity"/>
    <property type="evidence" value="ECO:0000314"/>
    <property type="project" value="EcoliWiki"/>
</dbReference>
<dbReference type="GO" id="GO:0140664">
    <property type="term" value="F:ATP-dependent DNA damage sensor activity"/>
    <property type="evidence" value="ECO:0007669"/>
    <property type="project" value="InterPro"/>
</dbReference>
<dbReference type="GO" id="GO:0003684">
    <property type="term" value="F:damaged DNA binding"/>
    <property type="evidence" value="ECO:0007669"/>
    <property type="project" value="UniProtKB-UniRule"/>
</dbReference>
<dbReference type="GO" id="GO:0008301">
    <property type="term" value="F:DNA binding, bending"/>
    <property type="evidence" value="ECO:0000314"/>
    <property type="project" value="EcoliWiki"/>
</dbReference>
<dbReference type="GO" id="GO:0042802">
    <property type="term" value="F:identical protein binding"/>
    <property type="evidence" value="ECO:0000353"/>
    <property type="project" value="IntAct"/>
</dbReference>
<dbReference type="GO" id="GO:0030983">
    <property type="term" value="F:mismatched DNA binding"/>
    <property type="evidence" value="ECO:0000314"/>
    <property type="project" value="EcoliWiki"/>
</dbReference>
<dbReference type="GO" id="GO:0006974">
    <property type="term" value="P:DNA damage response"/>
    <property type="evidence" value="ECO:0000270"/>
    <property type="project" value="EcoCyc"/>
</dbReference>
<dbReference type="GO" id="GO:0006298">
    <property type="term" value="P:mismatch repair"/>
    <property type="evidence" value="ECO:0000314"/>
    <property type="project" value="EcoCyc"/>
</dbReference>
<dbReference type="GO" id="GO:0000018">
    <property type="term" value="P:regulation of DNA recombination"/>
    <property type="evidence" value="ECO:0000315"/>
    <property type="project" value="EcoliWiki"/>
</dbReference>
<dbReference type="CDD" id="cd03284">
    <property type="entry name" value="ABC_MutS1"/>
    <property type="match status" value="1"/>
</dbReference>
<dbReference type="FunFam" id="1.10.1420.10:FF:000002">
    <property type="entry name" value="DNA mismatch repair protein MutS"/>
    <property type="match status" value="1"/>
</dbReference>
<dbReference type="FunFam" id="3.30.420.110:FF:000001">
    <property type="entry name" value="DNA mismatch repair protein MutS"/>
    <property type="match status" value="1"/>
</dbReference>
<dbReference type="FunFam" id="3.40.1170.10:FF:000001">
    <property type="entry name" value="DNA mismatch repair protein MutS"/>
    <property type="match status" value="1"/>
</dbReference>
<dbReference type="FunFam" id="3.40.50.300:FF:000283">
    <property type="entry name" value="DNA mismatch repair protein MutS"/>
    <property type="match status" value="1"/>
</dbReference>
<dbReference type="Gene3D" id="1.10.1420.10">
    <property type="match status" value="2"/>
</dbReference>
<dbReference type="Gene3D" id="6.10.140.430">
    <property type="match status" value="1"/>
</dbReference>
<dbReference type="Gene3D" id="3.40.1170.10">
    <property type="entry name" value="DNA repair protein MutS, domain I"/>
    <property type="match status" value="1"/>
</dbReference>
<dbReference type="Gene3D" id="3.30.420.110">
    <property type="entry name" value="MutS, connector domain"/>
    <property type="match status" value="1"/>
</dbReference>
<dbReference type="Gene3D" id="3.40.50.300">
    <property type="entry name" value="P-loop containing nucleotide triphosphate hydrolases"/>
    <property type="match status" value="1"/>
</dbReference>
<dbReference type="HAMAP" id="MF_00096">
    <property type="entry name" value="MutS"/>
    <property type="match status" value="1"/>
</dbReference>
<dbReference type="InterPro" id="IPR005748">
    <property type="entry name" value="DNA_mismatch_repair_MutS"/>
</dbReference>
<dbReference type="InterPro" id="IPR007695">
    <property type="entry name" value="DNA_mismatch_repair_MutS-lik_N"/>
</dbReference>
<dbReference type="InterPro" id="IPR017261">
    <property type="entry name" value="DNA_mismatch_repair_MutS/MSH"/>
</dbReference>
<dbReference type="InterPro" id="IPR000432">
    <property type="entry name" value="DNA_mismatch_repair_MutS_C"/>
</dbReference>
<dbReference type="InterPro" id="IPR007861">
    <property type="entry name" value="DNA_mismatch_repair_MutS_clamp"/>
</dbReference>
<dbReference type="InterPro" id="IPR007696">
    <property type="entry name" value="DNA_mismatch_repair_MutS_core"/>
</dbReference>
<dbReference type="InterPro" id="IPR016151">
    <property type="entry name" value="DNA_mismatch_repair_MutS_N"/>
</dbReference>
<dbReference type="InterPro" id="IPR036187">
    <property type="entry name" value="DNA_mismatch_repair_MutS_sf"/>
</dbReference>
<dbReference type="InterPro" id="IPR007860">
    <property type="entry name" value="DNA_mmatch_repair_MutS_con_dom"/>
</dbReference>
<dbReference type="InterPro" id="IPR045076">
    <property type="entry name" value="MutS"/>
</dbReference>
<dbReference type="InterPro" id="IPR036678">
    <property type="entry name" value="MutS_con_dom_sf"/>
</dbReference>
<dbReference type="InterPro" id="IPR027417">
    <property type="entry name" value="P-loop_NTPase"/>
</dbReference>
<dbReference type="NCBIfam" id="TIGR01070">
    <property type="entry name" value="mutS1"/>
    <property type="match status" value="1"/>
</dbReference>
<dbReference type="NCBIfam" id="NF003810">
    <property type="entry name" value="PRK05399.1"/>
    <property type="match status" value="1"/>
</dbReference>
<dbReference type="PANTHER" id="PTHR11361:SF34">
    <property type="entry name" value="DNA MISMATCH REPAIR PROTEIN MSH1, MITOCHONDRIAL"/>
    <property type="match status" value="1"/>
</dbReference>
<dbReference type="PANTHER" id="PTHR11361">
    <property type="entry name" value="DNA MISMATCH REPAIR PROTEIN MUTS FAMILY MEMBER"/>
    <property type="match status" value="1"/>
</dbReference>
<dbReference type="Pfam" id="PF01624">
    <property type="entry name" value="MutS_I"/>
    <property type="match status" value="1"/>
</dbReference>
<dbReference type="Pfam" id="PF05188">
    <property type="entry name" value="MutS_II"/>
    <property type="match status" value="1"/>
</dbReference>
<dbReference type="Pfam" id="PF05192">
    <property type="entry name" value="MutS_III"/>
    <property type="match status" value="1"/>
</dbReference>
<dbReference type="Pfam" id="PF05190">
    <property type="entry name" value="MutS_IV"/>
    <property type="match status" value="1"/>
</dbReference>
<dbReference type="Pfam" id="PF00488">
    <property type="entry name" value="MutS_V"/>
    <property type="match status" value="1"/>
</dbReference>
<dbReference type="PIRSF" id="PIRSF037677">
    <property type="entry name" value="DNA_mis_repair_Msh6"/>
    <property type="match status" value="1"/>
</dbReference>
<dbReference type="SMART" id="SM00534">
    <property type="entry name" value="MUTSac"/>
    <property type="match status" value="1"/>
</dbReference>
<dbReference type="SMART" id="SM00533">
    <property type="entry name" value="MUTSd"/>
    <property type="match status" value="1"/>
</dbReference>
<dbReference type="SUPFAM" id="SSF55271">
    <property type="entry name" value="DNA repair protein MutS, domain I"/>
    <property type="match status" value="1"/>
</dbReference>
<dbReference type="SUPFAM" id="SSF53150">
    <property type="entry name" value="DNA repair protein MutS, domain II"/>
    <property type="match status" value="1"/>
</dbReference>
<dbReference type="SUPFAM" id="SSF48334">
    <property type="entry name" value="DNA repair protein MutS, domain III"/>
    <property type="match status" value="1"/>
</dbReference>
<dbReference type="SUPFAM" id="SSF52540">
    <property type="entry name" value="P-loop containing nucleoside triphosphate hydrolases"/>
    <property type="match status" value="1"/>
</dbReference>
<dbReference type="PROSITE" id="PS00486">
    <property type="entry name" value="DNA_MISMATCH_REPAIR_2"/>
    <property type="match status" value="1"/>
</dbReference>
<comment type="function">
    <text>This protein is involved in the repair of mismatches in DNA. It is possible that it carries out the mismatch recognition step. This protein has a weak ATPase activity.</text>
</comment>
<comment type="interaction">
    <interactant intactId="EBI-554920">
        <id>P23909</id>
    </interactant>
    <interactant intactId="EBI-554913">
        <id>P23367</id>
        <label>mutL</label>
    </interactant>
    <organismsDiffer>false</organismsDiffer>
    <experiments>4</experiments>
</comment>
<comment type="interaction">
    <interactant intactId="EBI-554920">
        <id>P23909</id>
    </interactant>
    <interactant intactId="EBI-554920">
        <id>P23909</id>
        <label>mutS</label>
    </interactant>
    <organismsDiffer>false</organismsDiffer>
    <experiments>4</experiments>
</comment>
<comment type="interaction">
    <interactant intactId="EBI-554920">
        <id>P23909</id>
    </interactant>
    <interactant intactId="EBI-301077">
        <id>P0CE47</id>
        <label>tufA</label>
    </interactant>
    <organismsDiffer>false</organismsDiffer>
    <experiments>2</experiments>
</comment>
<comment type="similarity">
    <text evidence="2">Belongs to the DNA mismatch repair MutS family.</text>
</comment>
<gene>
    <name type="primary">mutS</name>
    <name type="synonym">fdv</name>
    <name type="ordered locus">b2733</name>
    <name type="ordered locus">JW2703</name>
</gene>
<protein>
    <recommendedName>
        <fullName>DNA mismatch repair protein MutS</fullName>
    </recommendedName>
</protein>
<keyword id="KW-0002">3D-structure</keyword>
<keyword id="KW-0067">ATP-binding</keyword>
<keyword id="KW-0227">DNA damage</keyword>
<keyword id="KW-0234">DNA repair</keyword>
<keyword id="KW-0238">DNA-binding</keyword>
<keyword id="KW-0547">Nucleotide-binding</keyword>
<keyword id="KW-1185">Reference proteome</keyword>
<organism>
    <name type="scientific">Escherichia coli (strain K12)</name>
    <dbReference type="NCBI Taxonomy" id="83333"/>
    <lineage>
        <taxon>Bacteria</taxon>
        <taxon>Pseudomonadati</taxon>
        <taxon>Pseudomonadota</taxon>
        <taxon>Gammaproteobacteria</taxon>
        <taxon>Enterobacterales</taxon>
        <taxon>Enterobacteriaceae</taxon>
        <taxon>Escherichia</taxon>
    </lineage>
</organism>
<evidence type="ECO:0000255" key="1"/>
<evidence type="ECO:0000305" key="2"/>
<evidence type="ECO:0007829" key="3">
    <source>
        <dbReference type="PDB" id="1OH7"/>
    </source>
</evidence>
<evidence type="ECO:0007829" key="4">
    <source>
        <dbReference type="PDB" id="1W7A"/>
    </source>
</evidence>
<evidence type="ECO:0007829" key="5">
    <source>
        <dbReference type="PDB" id="1WB9"/>
    </source>
</evidence>
<evidence type="ECO:0007829" key="6">
    <source>
        <dbReference type="PDB" id="3ZLJ"/>
    </source>
</evidence>
<evidence type="ECO:0007829" key="7">
    <source>
        <dbReference type="PDB" id="6I5F"/>
    </source>
</evidence>
<evidence type="ECO:0007829" key="8">
    <source>
        <dbReference type="PDB" id="7OTO"/>
    </source>
</evidence>
<evidence type="ECO:0007829" key="9">
    <source>
        <dbReference type="PDB" id="7OU4"/>
    </source>
</evidence>
<sequence>MSAIENFDAHTPMMQQYLRLKAQHPEILLFYRMGDFYELFYDDAKRASQLLDISLTKRGASAGEPIPMAGIPYHAVENYLAKLVNQGESVAICEQIGDPATSKGPVERKVVRIVTPGTISDEALLQERQDNLLAAIWQDSKGFGYATLDISSGRFRLSEPADRETMAAELQRTNPAELLYAEDFAEMSLIEGRRGLRRRPLWEFEIDTARQQLNLQFGTRDLVGFGVENAPRGLCAAGCLLQYAKDTQRTTLPHIRSITMEREQDSIIMDAATRRNLEITQNLAGGAENTLASVLDCTVTPMGSRMLKRWLHMPVRDTRVLLERQQTIGALQDFTAGLQPVLRQVGDLERILARLALRTARPRDLARMRHAFQQLPELRAQLETVDSAPVQALREKMGEFAELRDLLERAIIDTPPVLVRDGGVIASGYNEELDEWRALADGATDYLERLEVRERERTGLDTLKVGFNAVHGYYIQISRGQSHLAPINYMRRQTLKNAERYIIPELKEYEDKVLTSKGKALALEKQLYEELFDLLLPHLEALQQSASALAELDVLVNLAERAYTLNYTCPTFIDKPGIRITEGRHPVVEQVLNEPFIANPLNLSPQRRMLIITGPNMGGKSTYMRQTALIALMAYIGSYVPAQKVEIGPIDRIFTRVGAADDLASGRSTFMVEMTETANILHNATEYSLVLMDEIGRGTSTYDGLSLAWACAENLANKIKALTLFATHYFELTQLPEKMEGVANVHLDALEHGDTIAFMHSVQDGAASKSYGLAVAALAGVPKEVIKRARQKLRELESISPNAAATQVDGTQMSLLSVPEETSPAVEALENLDPDSLTPRQALEWIYRLKSLV</sequence>
<name>MUTS_ECOLI</name>
<reference key="1">
    <citation type="journal article" date="1991" name="J. Bacteriol.">
        <title>The Escherichia coli fdv gene probably encodes mutS and is located at minute 58.8 adjacent to the hyc-hyp gene cluster.</title>
        <authorList>
            <person name="Schlensog V."/>
            <person name="Boeck A."/>
        </authorList>
    </citation>
    <scope>NUCLEOTIDE SEQUENCE [GENOMIC DNA]</scope>
</reference>
<reference key="2">
    <citation type="journal article" date="1997" name="Science">
        <title>The complete genome sequence of Escherichia coli K-12.</title>
        <authorList>
            <person name="Blattner F.R."/>
            <person name="Plunkett G. III"/>
            <person name="Bloch C.A."/>
            <person name="Perna N.T."/>
            <person name="Burland V."/>
            <person name="Riley M."/>
            <person name="Collado-Vides J."/>
            <person name="Glasner J.D."/>
            <person name="Rode C.K."/>
            <person name="Mayhew G.F."/>
            <person name="Gregor J."/>
            <person name="Davis N.W."/>
            <person name="Kirkpatrick H.A."/>
            <person name="Goeden M.A."/>
            <person name="Rose D.J."/>
            <person name="Mau B."/>
            <person name="Shao Y."/>
        </authorList>
    </citation>
    <scope>NUCLEOTIDE SEQUENCE [LARGE SCALE GENOMIC DNA]</scope>
    <source>
        <strain>K12 / MG1655 / ATCC 47076</strain>
    </source>
</reference>
<reference key="3">
    <citation type="journal article" date="2006" name="Mol. Syst. Biol.">
        <title>Highly accurate genome sequences of Escherichia coli K-12 strains MG1655 and W3110.</title>
        <authorList>
            <person name="Hayashi K."/>
            <person name="Morooka N."/>
            <person name="Yamamoto Y."/>
            <person name="Fujita K."/>
            <person name="Isono K."/>
            <person name="Choi S."/>
            <person name="Ohtsubo E."/>
            <person name="Baba T."/>
            <person name="Wanner B.L."/>
            <person name="Mori H."/>
            <person name="Horiuchi T."/>
        </authorList>
    </citation>
    <scope>NUCLEOTIDE SEQUENCE [LARGE SCALE GENOMIC DNA]</scope>
    <source>
        <strain>K12 / W3110 / ATCC 27325 / DSM 5911</strain>
    </source>
</reference>
<reference key="4">
    <citation type="submission" date="1997-05" db="EMBL/GenBank/DDBJ databases">
        <authorList>
            <person name="Denamur E."/>
        </authorList>
    </citation>
    <scope>NUCLEOTIDE SEQUENCE [GENOMIC DNA] OF 602-731</scope>
    <source>
        <strain>Various strains</strain>
    </source>
</reference>
<reference key="5">
    <citation type="journal article" date="1997" name="Electrophoresis">
        <title>Escherichia coli proteome analysis using the gene-protein database.</title>
        <authorList>
            <person name="VanBogelen R.A."/>
            <person name="Abshire K.Z."/>
            <person name="Moldover B."/>
            <person name="Olson E.R."/>
            <person name="Neidhardt F.C."/>
        </authorList>
    </citation>
    <scope>IDENTIFICATION BY 2D-GEL</scope>
</reference>
<feature type="chain" id="PRO_0000115094" description="DNA mismatch repair protein MutS">
    <location>
        <begin position="1"/>
        <end position="853"/>
    </location>
</feature>
<feature type="binding site" evidence="1">
    <location>
        <begin position="614"/>
        <end position="621"/>
    </location>
    <ligand>
        <name>ATP</name>
        <dbReference type="ChEBI" id="CHEBI:30616"/>
    </ligand>
</feature>
<feature type="helix" evidence="5">
    <location>
        <begin position="7"/>
        <end position="9"/>
    </location>
</feature>
<feature type="helix" evidence="5">
    <location>
        <begin position="12"/>
        <end position="23"/>
    </location>
</feature>
<feature type="strand" evidence="5">
    <location>
        <begin position="27"/>
        <end position="33"/>
    </location>
</feature>
<feature type="strand" evidence="5">
    <location>
        <begin position="36"/>
        <end position="40"/>
    </location>
</feature>
<feature type="helix" evidence="5">
    <location>
        <begin position="41"/>
        <end position="51"/>
    </location>
</feature>
<feature type="strand" evidence="5">
    <location>
        <begin position="56"/>
        <end position="58"/>
    </location>
</feature>
<feature type="strand" evidence="5">
    <location>
        <begin position="61"/>
        <end position="63"/>
    </location>
</feature>
<feature type="strand" evidence="5">
    <location>
        <begin position="66"/>
        <end position="72"/>
    </location>
</feature>
<feature type="helix" evidence="5">
    <location>
        <begin position="73"/>
        <end position="75"/>
    </location>
</feature>
<feature type="helix" evidence="5">
    <location>
        <begin position="76"/>
        <end position="85"/>
    </location>
</feature>
<feature type="strand" evidence="5">
    <location>
        <begin position="90"/>
        <end position="95"/>
    </location>
</feature>
<feature type="helix" evidence="5">
    <location>
        <begin position="99"/>
        <end position="101"/>
    </location>
</feature>
<feature type="strand" evidence="5">
    <location>
        <begin position="103"/>
        <end position="105"/>
    </location>
</feature>
<feature type="strand" evidence="5">
    <location>
        <begin position="108"/>
        <end position="114"/>
    </location>
</feature>
<feature type="turn" evidence="5">
    <location>
        <begin position="116"/>
        <end position="118"/>
    </location>
</feature>
<feature type="helix" evidence="5">
    <location>
        <begin position="122"/>
        <end position="124"/>
    </location>
</feature>
<feature type="strand" evidence="5">
    <location>
        <begin position="133"/>
        <end position="138"/>
    </location>
</feature>
<feature type="strand" evidence="5">
    <location>
        <begin position="143"/>
        <end position="148"/>
    </location>
</feature>
<feature type="turn" evidence="5">
    <location>
        <begin position="150"/>
        <end position="152"/>
    </location>
</feature>
<feature type="strand" evidence="5">
    <location>
        <begin position="155"/>
        <end position="158"/>
    </location>
</feature>
<feature type="helix" evidence="5">
    <location>
        <begin position="163"/>
        <end position="173"/>
    </location>
</feature>
<feature type="strand" evidence="5">
    <location>
        <begin position="176"/>
        <end position="181"/>
    </location>
</feature>
<feature type="helix" evidence="5">
    <location>
        <begin position="187"/>
        <end position="189"/>
    </location>
</feature>
<feature type="turn" evidence="5">
    <location>
        <begin position="190"/>
        <end position="192"/>
    </location>
</feature>
<feature type="strand" evidence="5">
    <location>
        <begin position="194"/>
        <end position="199"/>
    </location>
</feature>
<feature type="helix" evidence="5">
    <location>
        <begin position="201"/>
        <end position="204"/>
    </location>
</feature>
<feature type="helix" evidence="5">
    <location>
        <begin position="206"/>
        <end position="217"/>
    </location>
</feature>
<feature type="strand" evidence="7">
    <location>
        <begin position="220"/>
        <end position="222"/>
    </location>
</feature>
<feature type="helix" evidence="5">
    <location>
        <begin position="223"/>
        <end position="225"/>
    </location>
</feature>
<feature type="helix" evidence="5">
    <location>
        <begin position="231"/>
        <end position="248"/>
    </location>
</feature>
<feature type="strand" evidence="8">
    <location>
        <begin position="249"/>
        <end position="251"/>
    </location>
</feature>
<feature type="helix" evidence="8">
    <location>
        <begin position="252"/>
        <end position="254"/>
    </location>
</feature>
<feature type="strand" evidence="7">
    <location>
        <begin position="258"/>
        <end position="260"/>
    </location>
</feature>
<feature type="helix" evidence="5">
    <location>
        <begin position="263"/>
        <end position="265"/>
    </location>
</feature>
<feature type="helix" evidence="5">
    <location>
        <begin position="271"/>
        <end position="276"/>
    </location>
</feature>
<feature type="strand" evidence="5">
    <location>
        <begin position="279"/>
        <end position="281"/>
    </location>
</feature>
<feature type="strand" evidence="4">
    <location>
        <begin position="287"/>
        <end position="290"/>
    </location>
</feature>
<feature type="helix" evidence="5">
    <location>
        <begin position="291"/>
        <end position="295"/>
    </location>
</feature>
<feature type="helix" evidence="5">
    <location>
        <begin position="301"/>
        <end position="312"/>
    </location>
</feature>
<feature type="helix" evidence="5">
    <location>
        <begin position="318"/>
        <end position="330"/>
    </location>
</feature>
<feature type="helix" evidence="5">
    <location>
        <begin position="332"/>
        <end position="334"/>
    </location>
</feature>
<feature type="helix" evidence="5">
    <location>
        <begin position="335"/>
        <end position="343"/>
    </location>
</feature>
<feature type="helix" evidence="5">
    <location>
        <begin position="348"/>
        <end position="356"/>
    </location>
</feature>
<feature type="helix" evidence="5">
    <location>
        <begin position="362"/>
        <end position="372"/>
    </location>
</feature>
<feature type="helix" evidence="5">
    <location>
        <begin position="375"/>
        <end position="383"/>
    </location>
</feature>
<feature type="helix" evidence="5">
    <location>
        <begin position="388"/>
        <end position="397"/>
    </location>
</feature>
<feature type="helix" evidence="5">
    <location>
        <begin position="401"/>
        <end position="410"/>
    </location>
</feature>
<feature type="strand" evidence="9">
    <location>
        <begin position="419"/>
        <end position="421"/>
    </location>
</feature>
<feature type="helix" evidence="5">
    <location>
        <begin position="431"/>
        <end position="458"/>
    </location>
</feature>
<feature type="strand" evidence="5">
    <location>
        <begin position="464"/>
        <end position="468"/>
    </location>
</feature>
<feature type="turn" evidence="5">
    <location>
        <begin position="469"/>
        <end position="471"/>
    </location>
</feature>
<feature type="strand" evidence="5">
    <location>
        <begin position="472"/>
        <end position="478"/>
    </location>
</feature>
<feature type="helix" evidence="5">
    <location>
        <begin position="479"/>
        <end position="482"/>
    </location>
</feature>
<feature type="strand" evidence="5">
    <location>
        <begin position="490"/>
        <end position="494"/>
    </location>
</feature>
<feature type="strand" evidence="5">
    <location>
        <begin position="496"/>
        <end position="502"/>
    </location>
</feature>
<feature type="helix" evidence="5">
    <location>
        <begin position="504"/>
        <end position="535"/>
    </location>
</feature>
<feature type="helix" evidence="5">
    <location>
        <begin position="536"/>
        <end position="538"/>
    </location>
</feature>
<feature type="helix" evidence="5">
    <location>
        <begin position="539"/>
        <end position="564"/>
    </location>
</feature>
<feature type="strand" evidence="3">
    <location>
        <begin position="570"/>
        <end position="572"/>
    </location>
</feature>
<feature type="strand" evidence="5">
    <location>
        <begin position="574"/>
        <end position="576"/>
    </location>
</feature>
<feature type="strand" evidence="5">
    <location>
        <begin position="578"/>
        <end position="583"/>
    </location>
</feature>
<feature type="helix" evidence="5">
    <location>
        <begin position="588"/>
        <end position="591"/>
    </location>
</feature>
<feature type="strand" evidence="4">
    <location>
        <begin position="592"/>
        <end position="594"/>
    </location>
</feature>
<feature type="strand" evidence="5">
    <location>
        <begin position="599"/>
        <end position="603"/>
    </location>
</feature>
<feature type="strand" evidence="5">
    <location>
        <begin position="605"/>
        <end position="607"/>
    </location>
</feature>
<feature type="strand" evidence="5">
    <location>
        <begin position="609"/>
        <end position="613"/>
    </location>
</feature>
<feature type="helix" evidence="5">
    <location>
        <begin position="620"/>
        <end position="634"/>
    </location>
</feature>
<feature type="turn" evidence="5">
    <location>
        <begin position="635"/>
        <end position="637"/>
    </location>
</feature>
<feature type="strand" evidence="5">
    <location>
        <begin position="640"/>
        <end position="647"/>
    </location>
</feature>
<feature type="strand" evidence="5">
    <location>
        <begin position="652"/>
        <end position="657"/>
    </location>
</feature>
<feature type="turn" evidence="9">
    <location>
        <begin position="663"/>
        <end position="666"/>
    </location>
</feature>
<feature type="helix" evidence="5">
    <location>
        <begin position="671"/>
        <end position="683"/>
    </location>
</feature>
<feature type="strand" evidence="5">
    <location>
        <begin position="688"/>
        <end position="694"/>
    </location>
</feature>
<feature type="turn" evidence="7">
    <location>
        <begin position="695"/>
        <end position="698"/>
    </location>
</feature>
<feature type="strand" evidence="5">
    <location>
        <begin position="699"/>
        <end position="702"/>
    </location>
</feature>
<feature type="helix" evidence="5">
    <location>
        <begin position="703"/>
        <end position="717"/>
    </location>
</feature>
<feature type="strand" evidence="5">
    <location>
        <begin position="722"/>
        <end position="726"/>
    </location>
</feature>
<feature type="helix" evidence="5">
    <location>
        <begin position="730"/>
        <end position="734"/>
    </location>
</feature>
<feature type="helix" evidence="5">
    <location>
        <begin position="735"/>
        <end position="738"/>
    </location>
</feature>
<feature type="strand" evidence="5">
    <location>
        <begin position="742"/>
        <end position="752"/>
    </location>
</feature>
<feature type="strand" evidence="5">
    <location>
        <begin position="755"/>
        <end position="765"/>
    </location>
</feature>
<feature type="helix" evidence="5">
    <location>
        <begin position="772"/>
        <end position="778"/>
    </location>
</feature>
<feature type="helix" evidence="5">
    <location>
        <begin position="783"/>
        <end position="797"/>
    </location>
</feature>
<feature type="helix" evidence="6">
    <location>
        <begin position="826"/>
        <end position="831"/>
    </location>
</feature>
<feature type="turn" evidence="6">
    <location>
        <begin position="834"/>
        <end position="836"/>
    </location>
</feature>
<feature type="helix" evidence="6">
    <location>
        <begin position="839"/>
        <end position="852"/>
    </location>
</feature>